<protein>
    <recommendedName>
        <fullName evidence="1">Peptide deformylase</fullName>
        <shortName evidence="1">PDF</shortName>
        <ecNumber evidence="1">3.5.1.88</ecNumber>
    </recommendedName>
    <alternativeName>
        <fullName evidence="1">Polypeptide deformylase</fullName>
    </alternativeName>
</protein>
<comment type="function">
    <text evidence="1">Removes the formyl group from the N-terminal Met of newly synthesized proteins. Requires at least a dipeptide for an efficient rate of reaction. N-terminal L-methionine is a prerequisite for activity but the enzyme has broad specificity at other positions.</text>
</comment>
<comment type="catalytic activity">
    <reaction evidence="1">
        <text>N-terminal N-formyl-L-methionyl-[peptide] + H2O = N-terminal L-methionyl-[peptide] + formate</text>
        <dbReference type="Rhea" id="RHEA:24420"/>
        <dbReference type="Rhea" id="RHEA-COMP:10639"/>
        <dbReference type="Rhea" id="RHEA-COMP:10640"/>
        <dbReference type="ChEBI" id="CHEBI:15377"/>
        <dbReference type="ChEBI" id="CHEBI:15740"/>
        <dbReference type="ChEBI" id="CHEBI:49298"/>
        <dbReference type="ChEBI" id="CHEBI:64731"/>
        <dbReference type="EC" id="3.5.1.88"/>
    </reaction>
</comment>
<comment type="cofactor">
    <cofactor evidence="1">
        <name>Fe(2+)</name>
        <dbReference type="ChEBI" id="CHEBI:29033"/>
    </cofactor>
    <text evidence="1">Binds 1 Fe(2+) ion.</text>
</comment>
<comment type="similarity">
    <text evidence="1">Belongs to the polypeptide deformylase family.</text>
</comment>
<feature type="chain" id="PRO_0000082788" description="Peptide deformylase">
    <location>
        <begin position="1"/>
        <end position="169"/>
    </location>
</feature>
<feature type="active site" evidence="1">
    <location>
        <position position="134"/>
    </location>
</feature>
<feature type="binding site" evidence="1">
    <location>
        <position position="91"/>
    </location>
    <ligand>
        <name>Fe cation</name>
        <dbReference type="ChEBI" id="CHEBI:24875"/>
    </ligand>
</feature>
<feature type="binding site" evidence="1">
    <location>
        <position position="133"/>
    </location>
    <ligand>
        <name>Fe cation</name>
        <dbReference type="ChEBI" id="CHEBI:24875"/>
    </ligand>
</feature>
<feature type="binding site" evidence="1">
    <location>
        <position position="137"/>
    </location>
    <ligand>
        <name>Fe cation</name>
        <dbReference type="ChEBI" id="CHEBI:24875"/>
    </ligand>
</feature>
<gene>
    <name evidence="1" type="primary">def</name>
    <name type="ordered locus">HI_0622</name>
</gene>
<proteinExistence type="inferred from homology"/>
<dbReference type="EC" id="3.5.1.88" evidence="1"/>
<dbReference type="EMBL" id="L42023">
    <property type="protein sequence ID" value="AAC22282.1"/>
    <property type="molecule type" value="Genomic_DNA"/>
</dbReference>
<dbReference type="PIR" id="D64082">
    <property type="entry name" value="D64082"/>
</dbReference>
<dbReference type="RefSeq" id="NP_438782.1">
    <property type="nucleotide sequence ID" value="NC_000907.1"/>
</dbReference>
<dbReference type="SMR" id="P44786"/>
<dbReference type="STRING" id="71421.HI_0622"/>
<dbReference type="BindingDB" id="P44786"/>
<dbReference type="EnsemblBacteria" id="AAC22282">
    <property type="protein sequence ID" value="AAC22282"/>
    <property type="gene ID" value="HI_0622"/>
</dbReference>
<dbReference type="KEGG" id="hin:HI_0622"/>
<dbReference type="PATRIC" id="fig|71421.8.peg.648"/>
<dbReference type="eggNOG" id="COG0242">
    <property type="taxonomic scope" value="Bacteria"/>
</dbReference>
<dbReference type="HOGENOM" id="CLU_061901_2_1_6"/>
<dbReference type="OrthoDB" id="9804313at2"/>
<dbReference type="PhylomeDB" id="P44786"/>
<dbReference type="BioCyc" id="HINF71421:G1GJ1-649-MONOMER"/>
<dbReference type="BRENDA" id="3.5.1.88">
    <property type="organism ID" value="2529"/>
</dbReference>
<dbReference type="Proteomes" id="UP000000579">
    <property type="component" value="Chromosome"/>
</dbReference>
<dbReference type="GO" id="GO:0046872">
    <property type="term" value="F:metal ion binding"/>
    <property type="evidence" value="ECO:0007669"/>
    <property type="project" value="UniProtKB-KW"/>
</dbReference>
<dbReference type="GO" id="GO:0042586">
    <property type="term" value="F:peptide deformylase activity"/>
    <property type="evidence" value="ECO:0000318"/>
    <property type="project" value="GO_Central"/>
</dbReference>
<dbReference type="GO" id="GO:0043686">
    <property type="term" value="P:co-translational protein modification"/>
    <property type="evidence" value="ECO:0000318"/>
    <property type="project" value="GO_Central"/>
</dbReference>
<dbReference type="GO" id="GO:0006412">
    <property type="term" value="P:translation"/>
    <property type="evidence" value="ECO:0007669"/>
    <property type="project" value="UniProtKB-UniRule"/>
</dbReference>
<dbReference type="CDD" id="cd00487">
    <property type="entry name" value="Pep_deformylase"/>
    <property type="match status" value="1"/>
</dbReference>
<dbReference type="FunFam" id="3.90.45.10:FF:000001">
    <property type="entry name" value="Peptide deformylase"/>
    <property type="match status" value="1"/>
</dbReference>
<dbReference type="Gene3D" id="3.90.45.10">
    <property type="entry name" value="Peptide deformylase"/>
    <property type="match status" value="1"/>
</dbReference>
<dbReference type="HAMAP" id="MF_00163">
    <property type="entry name" value="Pep_deformylase"/>
    <property type="match status" value="1"/>
</dbReference>
<dbReference type="InterPro" id="IPR023635">
    <property type="entry name" value="Peptide_deformylase"/>
</dbReference>
<dbReference type="InterPro" id="IPR036821">
    <property type="entry name" value="Peptide_deformylase_sf"/>
</dbReference>
<dbReference type="NCBIfam" id="TIGR00079">
    <property type="entry name" value="pept_deformyl"/>
    <property type="match status" value="1"/>
</dbReference>
<dbReference type="NCBIfam" id="NF001159">
    <property type="entry name" value="PRK00150.1-3"/>
    <property type="match status" value="1"/>
</dbReference>
<dbReference type="PANTHER" id="PTHR10458">
    <property type="entry name" value="PEPTIDE DEFORMYLASE"/>
    <property type="match status" value="1"/>
</dbReference>
<dbReference type="PANTHER" id="PTHR10458:SF21">
    <property type="entry name" value="PEPTIDE DEFORMYLASE"/>
    <property type="match status" value="1"/>
</dbReference>
<dbReference type="Pfam" id="PF01327">
    <property type="entry name" value="Pep_deformylase"/>
    <property type="match status" value="1"/>
</dbReference>
<dbReference type="PIRSF" id="PIRSF004749">
    <property type="entry name" value="Pep_def"/>
    <property type="match status" value="1"/>
</dbReference>
<dbReference type="PRINTS" id="PR01576">
    <property type="entry name" value="PDEFORMYLASE"/>
</dbReference>
<dbReference type="SUPFAM" id="SSF56420">
    <property type="entry name" value="Peptide deformylase"/>
    <property type="match status" value="1"/>
</dbReference>
<name>DEF_HAEIN</name>
<accession>P44786</accession>
<keyword id="KW-0378">Hydrolase</keyword>
<keyword id="KW-0408">Iron</keyword>
<keyword id="KW-0479">Metal-binding</keyword>
<keyword id="KW-0648">Protein biosynthesis</keyword>
<keyword id="KW-1185">Reference proteome</keyword>
<organism>
    <name type="scientific">Haemophilus influenzae (strain ATCC 51907 / DSM 11121 / KW20 / Rd)</name>
    <dbReference type="NCBI Taxonomy" id="71421"/>
    <lineage>
        <taxon>Bacteria</taxon>
        <taxon>Pseudomonadati</taxon>
        <taxon>Pseudomonadota</taxon>
        <taxon>Gammaproteobacteria</taxon>
        <taxon>Pasteurellales</taxon>
        <taxon>Pasteurellaceae</taxon>
        <taxon>Haemophilus</taxon>
    </lineage>
</organism>
<sequence>MTALNVLIYPDDHLKVVCEPVTKVNDAIRKIVDDMFDTMYQEKGIGLAAPQVDILQRIITIDVEGDKQNQFVLINPEILASEGETGIEEGCLSIPGFRALVPRKEKVTVRALDRDGKEFTLDADGLLAICIQHEIDHLNGILFVDYLSPLKRQRIKEKLIKYKKQIAKS</sequence>
<evidence type="ECO:0000255" key="1">
    <source>
        <dbReference type="HAMAP-Rule" id="MF_00163"/>
    </source>
</evidence>
<reference key="1">
    <citation type="journal article" date="1995" name="Science">
        <title>Whole-genome random sequencing and assembly of Haemophilus influenzae Rd.</title>
        <authorList>
            <person name="Fleischmann R.D."/>
            <person name="Adams M.D."/>
            <person name="White O."/>
            <person name="Clayton R.A."/>
            <person name="Kirkness E.F."/>
            <person name="Kerlavage A.R."/>
            <person name="Bult C.J."/>
            <person name="Tomb J.-F."/>
            <person name="Dougherty B.A."/>
            <person name="Merrick J.M."/>
            <person name="McKenney K."/>
            <person name="Sutton G.G."/>
            <person name="FitzHugh W."/>
            <person name="Fields C.A."/>
            <person name="Gocayne J.D."/>
            <person name="Scott J.D."/>
            <person name="Shirley R."/>
            <person name="Liu L.-I."/>
            <person name="Glodek A."/>
            <person name="Kelley J.M."/>
            <person name="Weidman J.F."/>
            <person name="Phillips C.A."/>
            <person name="Spriggs T."/>
            <person name="Hedblom E."/>
            <person name="Cotton M.D."/>
            <person name="Utterback T.R."/>
            <person name="Hanna M.C."/>
            <person name="Nguyen D.T."/>
            <person name="Saudek D.M."/>
            <person name="Brandon R.C."/>
            <person name="Fine L.D."/>
            <person name="Fritchman J.L."/>
            <person name="Fuhrmann J.L."/>
            <person name="Geoghagen N.S.M."/>
            <person name="Gnehm C.L."/>
            <person name="McDonald L.A."/>
            <person name="Small K.V."/>
            <person name="Fraser C.M."/>
            <person name="Smith H.O."/>
            <person name="Venter J.C."/>
        </authorList>
    </citation>
    <scope>NUCLEOTIDE SEQUENCE [LARGE SCALE GENOMIC DNA]</scope>
    <source>
        <strain>ATCC 51907 / DSM 11121 / KW20 / Rd</strain>
    </source>
</reference>